<accession>Q8TB45</accession>
<accession>B2RCL9</accession>
<accession>B4DN97</accession>
<accession>E7EV87</accession>
<accession>Q96EQ1</accession>
<accession>Q9H0R7</accession>
<accession>Q9H894</accession>
<accession>Q9HA07</accession>
<sequence>MEEGGSTGSAGSDSSTSGSGGAQQRELERMAEVLVTGEQLRLRLHEEKVIKDRRHHLKTYPNCFVAKELIDWLIEHKEASDRETAIKLMQKLADRGIIHHVCDEHKEFKDVKLFYRFRKDDGTFPLDNEVKAFMRGQRLYEKLMSPENTLLQPREEEGVKYERTFMASEFLDWLVQEGEATTRKEAEQLCHRLMEHGIIQHVSNKHPFVDSNLLYQFRMNFRRRRRLMELLNEKSPSSQETHDSPFCLRKQSHDNRKSTSFMSVSPSKEIKIVSAVRRSSMSSCGSSGYFSSSPTLSSSPPVLCNPKSVLKRPVTSEELLTPGAPYARKTFTIVGDAVGWGFVVRGSKPCHIQAVDPSGPAAAAGMKVCQFVVSVNGLNVLHVDYRTVSNLILTGPRTIVMEVMEELEC</sequence>
<organism>
    <name type="scientific">Homo sapiens</name>
    <name type="common">Human</name>
    <dbReference type="NCBI Taxonomy" id="9606"/>
    <lineage>
        <taxon>Eukaryota</taxon>
        <taxon>Metazoa</taxon>
        <taxon>Chordata</taxon>
        <taxon>Craniata</taxon>
        <taxon>Vertebrata</taxon>
        <taxon>Euteleostomi</taxon>
        <taxon>Mammalia</taxon>
        <taxon>Eutheria</taxon>
        <taxon>Euarchontoglires</taxon>
        <taxon>Primates</taxon>
        <taxon>Haplorrhini</taxon>
        <taxon>Catarrhini</taxon>
        <taxon>Hominidae</taxon>
        <taxon>Homo</taxon>
    </lineage>
</organism>
<gene>
    <name evidence="23 28" type="primary">DEPTOR</name>
    <name evidence="24" type="synonym">DEPDC6</name>
</gene>
<comment type="function">
    <text evidence="8 9 10 11 12 13 18 19">Negative regulator of the mTORC1 and mTORC2 complexes: inhibits the protein kinase activity of MTOR, thereby inactivating both complexes (PubMed:19446321, PubMed:22017875, PubMed:22017876, PubMed:22017877, PubMed:25936805, PubMed:29382726, PubMed:34519268, PubMed:34519269). DEPTOR inhibits mTORC1 and mTORC2 to induce autophagy (PubMed:22017875, PubMed:22017876, PubMed:22017877). In contrast to AKT1S1/PRAS40, only partially inhibits mTORC1 activity (PubMed:34519268, PubMed:34519269).</text>
</comment>
<comment type="activity regulation">
    <text evidence="9 10 11 12 17">Inhibited upon phosphatidic acid-binding: phosphatidic acid produced upon mitogenic stimulation promotes DEPTOR dissociatiom from the mTORC1 and mTORC2 complexes, leading to their activation (PubMed:25936805, PubMed:33865870). Specifically binds unsaturated phosphatidic acid, such as 16:0-18:1, 18:0-18:1 and di-18:1 (PubMed:25936805). Inhibited when nutrients are present via a feedback loop: phosphorylation by MTOR promotes DEPTOR ubiquitination and degradation (PubMed:22017875, PubMed:22017876, PubMed:22017877).</text>
</comment>
<comment type="subunit">
    <text evidence="8 12 14 15 18 19">Associated component of the mechanistic target of rapamycin complex 1 (mTORC1) which contains MTOR, MLST8 and RPTOR (PubMed:19446321, PubMed:25936805, PubMed:34519268, PubMed:34519269). Associated component of the mechanistic target of rapamycin complex 2 (mTORC2) which contains MTOR, MLST8, PROTOR1, RICTOR, MAPKAP1 and DEPTOR (PubMed:19446321, PubMed:34519268). Interacts (via PDZ domain) with MTOR; interacts with MTOR within both mTORC1 and mTORC2 (PubMed:19446321). Interacts (via PDZ domain) with MINAR1 (via N-terminus) (PubMed:30080879). Interacts with SIK3 (PubMed:30232230).</text>
</comment>
<comment type="interaction">
    <interactant intactId="EBI-2359040">
        <id>Q8TB45</id>
    </interactant>
    <interactant intactId="EBI-17183751">
        <id>X5D778</id>
        <label>ANKRD11</label>
    </interactant>
    <organismsDiffer>false</organismsDiffer>
    <experiments>3</experiments>
</comment>
<comment type="interaction">
    <interactant intactId="EBI-2359040">
        <id>Q8TB45</id>
    </interactant>
    <interactant intactId="EBI-2837012">
        <id>Q8TBZ0</id>
        <label>CCDC110</label>
    </interactant>
    <organismsDiffer>false</organismsDiffer>
    <experiments>3</experiments>
</comment>
<comment type="interaction">
    <interactant intactId="EBI-2359040">
        <id>Q8TB45</id>
    </interactant>
    <interactant intactId="EBI-359260">
        <id>P42345</id>
        <label>MTOR</label>
    </interactant>
    <organismsDiffer>false</organismsDiffer>
    <experiments>5</experiments>
</comment>
<comment type="interaction">
    <interactant intactId="EBI-2359040">
        <id>Q8TB45</id>
    </interactant>
    <interactant intactId="EBI-359224">
        <id>Q13077</id>
        <label>TRAF1</label>
    </interactant>
    <organismsDiffer>false</organismsDiffer>
    <experiments>3</experiments>
</comment>
<comment type="interaction">
    <interactant intactId="EBI-2359040">
        <id>Q8TB45</id>
    </interactant>
    <interactant intactId="EBI-1571489">
        <id>P42346</id>
        <label>Mtor</label>
    </interactant>
    <organismsDiffer>true</organismsDiffer>
    <experiments>2</experiments>
</comment>
<comment type="subcellular location">
    <subcellularLocation>
        <location evidence="27">Lysosome membrane</location>
    </subcellularLocation>
    <text evidence="27">Localizes to the lysosomal membrane when associated with the mTORC1 and mTORC2 complexes.</text>
</comment>
<comment type="alternative products">
    <event type="alternative splicing"/>
    <isoform>
        <id>Q8TB45-1</id>
        <name>1</name>
        <sequence type="displayed"/>
    </isoform>
    <isoform>
        <id>Q8TB45-2</id>
        <name>2</name>
        <sequence type="described" ref="VSP_054681"/>
    </isoform>
</comment>
<comment type="induction">
    <text evidence="8">Expression is negatively regulated by both mTORC1 and mTORC2 (at protein level).</text>
</comment>
<comment type="PTM">
    <text evidence="8 9 10 11 20 21">Phosphorylation weakens interaction with MTOR within mTORC1 and mTORC2 (PubMed:19446321). Phosphorylated at Ser-286, Ser-287 and Ser-291 in response to mitogenic stimulation by MTOR: DEPTOR is either directly phosphorylated by MTOR or indirectly via proteins kinases that are activated by MTOR, such as CK1/CSNK1A1 (PubMed:22017875, PubMed:22017876, PubMed:22017877). Phosphorylation at Ser-286, Ser-287 and Ser-291 promotes ubiquitination by the SCF(BTRC) complex, followed by degradation (PubMed:22017875, PubMed:22017876, PubMed:22017877). Phosphorylation at Ser-235 by MAPK3/ERK1 promotes deubiquitination by USP7, enhancing its stability (PubMed:35216969). Phosphorylation at Tyr-289 by SYK impairs its interaction with MTOR, promoting mTORC1 and mTORC2 signaling (PubMed:34634301).</text>
</comment>
<comment type="PTM">
    <text evidence="9 10 11 13 14 16 21">Ubiquitinated; leading to proteasomal degradation (PubMed:22017875, PubMed:22017876, PubMed:22017877, PubMed:30080879, PubMed:33110214). Ubiquitination by the SCF(BTRC) and SCF(FBXW11) complexes following phosphorylation at Ser-286, Ser-287 and Ser-291 by MTOR, leads to its degradation by the proteasome (PubMed:22017875, PubMed:22017876, PubMed:22017877, PubMed:33110214). Deubiquitinated by OTUB1 in response to amino acid via a non-canonical mechanism, leading to DEPTOR stability (PubMed:29382726). Deubiquitinated by USP7 following phosphorylation at Ser-235, promoting its stability (PubMed:35216969).</text>
</comment>
<comment type="sequence caution" evidence="26">
    <conflict type="erroneous initiation">
        <sequence resource="EMBL-CDS" id="BAB14723"/>
    </conflict>
    <text>Truncated N-terminus.</text>
</comment>
<protein>
    <recommendedName>
        <fullName evidence="26">DEP domain-containing mTOR-interacting protein</fullName>
        <shortName evidence="25">hDEPTOR</shortName>
    </recommendedName>
    <alternativeName>
        <fullName evidence="24">DEP domain-containing protein 6</fullName>
    </alternativeName>
</protein>
<reference key="1">
    <citation type="journal article" date="2001" name="Genome Res.">
        <title>Towards a catalog of human genes and proteins: sequencing and analysis of 500 novel complete protein coding human cDNAs.</title>
        <authorList>
            <person name="Wiemann S."/>
            <person name="Weil B."/>
            <person name="Wellenreuther R."/>
            <person name="Gassenhuber J."/>
            <person name="Glassl S."/>
            <person name="Ansorge W."/>
            <person name="Boecher M."/>
            <person name="Bloecker H."/>
            <person name="Bauersachs S."/>
            <person name="Blum H."/>
            <person name="Lauber J."/>
            <person name="Duesterhoeft A."/>
            <person name="Beyer A."/>
            <person name="Koehrer K."/>
            <person name="Strack N."/>
            <person name="Mewes H.-W."/>
            <person name="Ottenwaelder B."/>
            <person name="Obermaier B."/>
            <person name="Tampe J."/>
            <person name="Heubner D."/>
            <person name="Wambutt R."/>
            <person name="Korn B."/>
            <person name="Klein M."/>
            <person name="Poustka A."/>
        </authorList>
    </citation>
    <scope>NUCLEOTIDE SEQUENCE [LARGE SCALE MRNA] (ISOFORM 1)</scope>
    <scope>VARIANT SER-204</scope>
    <source>
        <tissue>Brain</tissue>
    </source>
</reference>
<reference key="2">
    <citation type="journal article" date="2004" name="Nat. Genet.">
        <title>Complete sequencing and characterization of 21,243 full-length human cDNAs.</title>
        <authorList>
            <person name="Ota T."/>
            <person name="Suzuki Y."/>
            <person name="Nishikawa T."/>
            <person name="Otsuki T."/>
            <person name="Sugiyama T."/>
            <person name="Irie R."/>
            <person name="Wakamatsu A."/>
            <person name="Hayashi K."/>
            <person name="Sato H."/>
            <person name="Nagai K."/>
            <person name="Kimura K."/>
            <person name="Makita H."/>
            <person name="Sekine M."/>
            <person name="Obayashi M."/>
            <person name="Nishi T."/>
            <person name="Shibahara T."/>
            <person name="Tanaka T."/>
            <person name="Ishii S."/>
            <person name="Yamamoto J."/>
            <person name="Saito K."/>
            <person name="Kawai Y."/>
            <person name="Isono Y."/>
            <person name="Nakamura Y."/>
            <person name="Nagahari K."/>
            <person name="Murakami K."/>
            <person name="Yasuda T."/>
            <person name="Iwayanagi T."/>
            <person name="Wagatsuma M."/>
            <person name="Shiratori A."/>
            <person name="Sudo H."/>
            <person name="Hosoiri T."/>
            <person name="Kaku Y."/>
            <person name="Kodaira H."/>
            <person name="Kondo H."/>
            <person name="Sugawara M."/>
            <person name="Takahashi M."/>
            <person name="Kanda K."/>
            <person name="Yokoi T."/>
            <person name="Furuya T."/>
            <person name="Kikkawa E."/>
            <person name="Omura Y."/>
            <person name="Abe K."/>
            <person name="Kamihara K."/>
            <person name="Katsuta N."/>
            <person name="Sato K."/>
            <person name="Tanikawa M."/>
            <person name="Yamazaki M."/>
            <person name="Ninomiya K."/>
            <person name="Ishibashi T."/>
            <person name="Yamashita H."/>
            <person name="Murakawa K."/>
            <person name="Fujimori K."/>
            <person name="Tanai H."/>
            <person name="Kimata M."/>
            <person name="Watanabe M."/>
            <person name="Hiraoka S."/>
            <person name="Chiba Y."/>
            <person name="Ishida S."/>
            <person name="Ono Y."/>
            <person name="Takiguchi S."/>
            <person name="Watanabe S."/>
            <person name="Yosida M."/>
            <person name="Hotuta T."/>
            <person name="Kusano J."/>
            <person name="Kanehori K."/>
            <person name="Takahashi-Fujii A."/>
            <person name="Hara H."/>
            <person name="Tanase T.-O."/>
            <person name="Nomura Y."/>
            <person name="Togiya S."/>
            <person name="Komai F."/>
            <person name="Hara R."/>
            <person name="Takeuchi K."/>
            <person name="Arita M."/>
            <person name="Imose N."/>
            <person name="Musashino K."/>
            <person name="Yuuki H."/>
            <person name="Oshima A."/>
            <person name="Sasaki N."/>
            <person name="Aotsuka S."/>
            <person name="Yoshikawa Y."/>
            <person name="Matsunawa H."/>
            <person name="Ichihara T."/>
            <person name="Shiohata N."/>
            <person name="Sano S."/>
            <person name="Moriya S."/>
            <person name="Momiyama H."/>
            <person name="Satoh N."/>
            <person name="Takami S."/>
            <person name="Terashima Y."/>
            <person name="Suzuki O."/>
            <person name="Nakagawa S."/>
            <person name="Senoh A."/>
            <person name="Mizoguchi H."/>
            <person name="Goto Y."/>
            <person name="Shimizu F."/>
            <person name="Wakebe H."/>
            <person name="Hishigaki H."/>
            <person name="Watanabe T."/>
            <person name="Sugiyama A."/>
            <person name="Takemoto M."/>
            <person name="Kawakami B."/>
            <person name="Yamazaki M."/>
            <person name="Watanabe K."/>
            <person name="Kumagai A."/>
            <person name="Itakura S."/>
            <person name="Fukuzumi Y."/>
            <person name="Fujimori Y."/>
            <person name="Komiyama M."/>
            <person name="Tashiro H."/>
            <person name="Tanigami A."/>
            <person name="Fujiwara T."/>
            <person name="Ono T."/>
            <person name="Yamada K."/>
            <person name="Fujii Y."/>
            <person name="Ozaki K."/>
            <person name="Hirao M."/>
            <person name="Ohmori Y."/>
            <person name="Kawabata A."/>
            <person name="Hikiji T."/>
            <person name="Kobatake N."/>
            <person name="Inagaki H."/>
            <person name="Ikema Y."/>
            <person name="Okamoto S."/>
            <person name="Okitani R."/>
            <person name="Kawakami T."/>
            <person name="Noguchi S."/>
            <person name="Itoh T."/>
            <person name="Shigeta K."/>
            <person name="Senba T."/>
            <person name="Matsumura K."/>
            <person name="Nakajima Y."/>
            <person name="Mizuno T."/>
            <person name="Morinaga M."/>
            <person name="Sasaki M."/>
            <person name="Togashi T."/>
            <person name="Oyama M."/>
            <person name="Hata H."/>
            <person name="Watanabe M."/>
            <person name="Komatsu T."/>
            <person name="Mizushima-Sugano J."/>
            <person name="Satoh T."/>
            <person name="Shirai Y."/>
            <person name="Takahashi Y."/>
            <person name="Nakagawa K."/>
            <person name="Okumura K."/>
            <person name="Nagase T."/>
            <person name="Nomura N."/>
            <person name="Kikuchi H."/>
            <person name="Masuho Y."/>
            <person name="Yamashita R."/>
            <person name="Nakai K."/>
            <person name="Yada T."/>
            <person name="Nakamura Y."/>
            <person name="Ohara O."/>
            <person name="Isogai T."/>
            <person name="Sugano S."/>
        </authorList>
    </citation>
    <scope>NUCLEOTIDE SEQUENCE [LARGE SCALE MRNA] (ISOFORMS 1 AND 2)</scope>
    <scope>VARIANTS SER-204 AND ASN-389</scope>
    <source>
        <tissue>Heart</tissue>
        <tissue>Mammary gland</tissue>
        <tissue>Thyroid</tissue>
    </source>
</reference>
<reference key="3">
    <citation type="journal article" date="2006" name="Nature">
        <title>DNA sequence and analysis of human chromosome 8.</title>
        <authorList>
            <person name="Nusbaum C."/>
            <person name="Mikkelsen T.S."/>
            <person name="Zody M.C."/>
            <person name="Asakawa S."/>
            <person name="Taudien S."/>
            <person name="Garber M."/>
            <person name="Kodira C.D."/>
            <person name="Schueler M.G."/>
            <person name="Shimizu A."/>
            <person name="Whittaker C.A."/>
            <person name="Chang J.L."/>
            <person name="Cuomo C.A."/>
            <person name="Dewar K."/>
            <person name="FitzGerald M.G."/>
            <person name="Yang X."/>
            <person name="Allen N.R."/>
            <person name="Anderson S."/>
            <person name="Asakawa T."/>
            <person name="Blechschmidt K."/>
            <person name="Bloom T."/>
            <person name="Borowsky M.L."/>
            <person name="Butler J."/>
            <person name="Cook A."/>
            <person name="Corum B."/>
            <person name="DeArellano K."/>
            <person name="DeCaprio D."/>
            <person name="Dooley K.T."/>
            <person name="Dorris L. III"/>
            <person name="Engels R."/>
            <person name="Gloeckner G."/>
            <person name="Hafez N."/>
            <person name="Hagopian D.S."/>
            <person name="Hall J.L."/>
            <person name="Ishikawa S.K."/>
            <person name="Jaffe D.B."/>
            <person name="Kamat A."/>
            <person name="Kudoh J."/>
            <person name="Lehmann R."/>
            <person name="Lokitsang T."/>
            <person name="Macdonald P."/>
            <person name="Major J.E."/>
            <person name="Matthews C.D."/>
            <person name="Mauceli E."/>
            <person name="Menzel U."/>
            <person name="Mihalev A.H."/>
            <person name="Minoshima S."/>
            <person name="Murayama Y."/>
            <person name="Naylor J.W."/>
            <person name="Nicol R."/>
            <person name="Nguyen C."/>
            <person name="O'Leary S.B."/>
            <person name="O'Neill K."/>
            <person name="Parker S.C.J."/>
            <person name="Polley A."/>
            <person name="Raymond C.K."/>
            <person name="Reichwald K."/>
            <person name="Rodriguez J."/>
            <person name="Sasaki T."/>
            <person name="Schilhabel M."/>
            <person name="Siddiqui R."/>
            <person name="Smith C.L."/>
            <person name="Sneddon T.P."/>
            <person name="Talamas J.A."/>
            <person name="Tenzin P."/>
            <person name="Topham K."/>
            <person name="Venkataraman V."/>
            <person name="Wen G."/>
            <person name="Yamazaki S."/>
            <person name="Young S.K."/>
            <person name="Zeng Q."/>
            <person name="Zimmer A.R."/>
            <person name="Rosenthal A."/>
            <person name="Birren B.W."/>
            <person name="Platzer M."/>
            <person name="Shimizu N."/>
            <person name="Lander E.S."/>
        </authorList>
    </citation>
    <scope>NUCLEOTIDE SEQUENCE [LARGE SCALE GENOMIC DNA]</scope>
</reference>
<reference key="4">
    <citation type="submission" date="2005-09" db="EMBL/GenBank/DDBJ databases">
        <authorList>
            <person name="Mural R.J."/>
            <person name="Istrail S."/>
            <person name="Sutton G.G."/>
            <person name="Florea L."/>
            <person name="Halpern A.L."/>
            <person name="Mobarry C.M."/>
            <person name="Lippert R."/>
            <person name="Walenz B."/>
            <person name="Shatkay H."/>
            <person name="Dew I."/>
            <person name="Miller J.R."/>
            <person name="Flanigan M.J."/>
            <person name="Edwards N.J."/>
            <person name="Bolanos R."/>
            <person name="Fasulo D."/>
            <person name="Halldorsson B.V."/>
            <person name="Hannenhalli S."/>
            <person name="Turner R."/>
            <person name="Yooseph S."/>
            <person name="Lu F."/>
            <person name="Nusskern D.R."/>
            <person name="Shue B.C."/>
            <person name="Zheng X.H."/>
            <person name="Zhong F."/>
            <person name="Delcher A.L."/>
            <person name="Huson D.H."/>
            <person name="Kravitz S.A."/>
            <person name="Mouchard L."/>
            <person name="Reinert K."/>
            <person name="Remington K.A."/>
            <person name="Clark A.G."/>
            <person name="Waterman M.S."/>
            <person name="Eichler E.E."/>
            <person name="Adams M.D."/>
            <person name="Hunkapiller M.W."/>
            <person name="Myers E.W."/>
            <person name="Venter J.C."/>
        </authorList>
    </citation>
    <scope>NUCLEOTIDE SEQUENCE [LARGE SCALE GENOMIC DNA]</scope>
</reference>
<reference key="5">
    <citation type="journal article" date="2004" name="Genome Res.">
        <title>The status, quality, and expansion of the NIH full-length cDNA project: the Mammalian Gene Collection (MGC).</title>
        <authorList>
            <consortium name="The MGC Project Team"/>
        </authorList>
    </citation>
    <scope>NUCLEOTIDE SEQUENCE [LARGE SCALE MRNA] (ISOFORM 1)</scope>
    <scope>VARIANTS SER-204 AND ASN-389</scope>
    <source>
        <tissue>Cervix</tissue>
        <tissue>Colon</tissue>
    </source>
</reference>
<reference key="6">
    <citation type="journal article" date="2009" name="Anal. Chem.">
        <title>Lys-N and trypsin cover complementary parts of the phosphoproteome in a refined SCX-based approach.</title>
        <authorList>
            <person name="Gauci S."/>
            <person name="Helbig A.O."/>
            <person name="Slijper M."/>
            <person name="Krijgsveld J."/>
            <person name="Heck A.J."/>
            <person name="Mohammed S."/>
        </authorList>
    </citation>
    <scope>ACETYLATION [LARGE SCALE ANALYSIS] AT MET-1</scope>
    <scope>IDENTIFICATION BY MASS SPECTROMETRY [LARGE SCALE ANALYSIS]</scope>
</reference>
<reference key="7">
    <citation type="journal article" date="2009" name="Cell">
        <title>DEPTOR is an mTOR inhibitor frequently overexpressed in multiple myeloma cells and required for their survival.</title>
        <authorList>
            <person name="Peterson T.R."/>
            <person name="Laplante M."/>
            <person name="Thoreen C.C."/>
            <person name="Sancak Y."/>
            <person name="Kang S.A."/>
            <person name="Kuehl W.M."/>
            <person name="Gray N.S."/>
            <person name="Sabatini D.M."/>
        </authorList>
    </citation>
    <scope>FUNCTION</scope>
    <scope>INTERACTION WITH MTOR</scope>
    <scope>INDUCTION</scope>
    <scope>PHOSPHORYLATION AT THR-241; SER-244; SER-258; THR-259; SER-263; SER-265; SER-282; SER-283; SER-287; SER-293; SER-297; SER-298 AND SER-299</scope>
    <scope>MUTAGENESIS OF THR-241; SER-244; SER-258; THR-259; SER-263; SER-265; SER-282; SER-283; SER-287; SER-293; SER-297; SER-298 AND SER-299</scope>
    <scope>IDENTIFICATION BY MASS SPECTROMETRY</scope>
</reference>
<reference key="8">
    <citation type="journal article" date="2011" name="BMC Syst. Biol.">
        <title>Initial characterization of the human central proteome.</title>
        <authorList>
            <person name="Burkard T.R."/>
            <person name="Planyavsky M."/>
            <person name="Kaupe I."/>
            <person name="Breitwieser F.P."/>
            <person name="Buerckstuemmer T."/>
            <person name="Bennett K.L."/>
            <person name="Superti-Furga G."/>
            <person name="Colinge J."/>
        </authorList>
    </citation>
    <scope>IDENTIFICATION BY MASS SPECTROMETRY [LARGE SCALE ANALYSIS]</scope>
</reference>
<reference key="9">
    <citation type="journal article" date="2011" name="Mol. Cell">
        <title>mTOR drives its own activation via SCF(betaTrCP)-dependent degradation of the mTOR inhibitor DEPTOR.</title>
        <authorList>
            <person name="Gao D."/>
            <person name="Inuzuka H."/>
            <person name="Tan M.K."/>
            <person name="Fukushima H."/>
            <person name="Locasale J.W."/>
            <person name="Liu P."/>
            <person name="Wan L."/>
            <person name="Zhai B."/>
            <person name="Chin Y.R."/>
            <person name="Shaik S."/>
            <person name="Lyssiotis C.A."/>
            <person name="Gygi S.P."/>
            <person name="Toker A."/>
            <person name="Cantley L.C."/>
            <person name="Asara J.M."/>
            <person name="Harper J.W."/>
            <person name="Wei W."/>
        </authorList>
    </citation>
    <scope>FUNCTION</scope>
    <scope>ACTIVITY REGULATION</scope>
    <scope>PHOSPHORYLATION AT SER-265; SER-286; SER-287; SER-293; THR-295 AND SER-299</scope>
    <scope>UBIQUITINATION</scope>
    <scope>MUTAGENESIS OF SER-286; SER-293 AND 295-THR--SER-299</scope>
</reference>
<reference key="10">
    <citation type="journal article" date="2011" name="Mol. Cell">
        <title>DEPTOR, an mTOR inhibitor, is a physiological substrate of SCF(betaTrCP) E3 ubiquitin ligase and regulates survival and autophagy.</title>
        <authorList>
            <person name="Zhao Y."/>
            <person name="Xiong X."/>
            <person name="Sun Y."/>
        </authorList>
    </citation>
    <scope>FUNCTION</scope>
    <scope>ACTIVITY REGULATION</scope>
    <scope>PHOSPHORYLATION AT SER-286; SER-287 AND SER-291</scope>
    <scope>UBIQUITINATION</scope>
    <scope>MUTAGENESIS OF SER-286; SER-287 AND SER-291</scope>
</reference>
<reference key="11">
    <citation type="journal article" date="2011" name="Mol. Cell">
        <title>mTOR generates an auto-amplification loop by triggering the betaTrCP- and CK1alpha-dependent degradation of DEPTOR.</title>
        <authorList>
            <person name="Duan S."/>
            <person name="Skaar J.R."/>
            <person name="Kuchay S."/>
            <person name="Toschi A."/>
            <person name="Kanarek N."/>
            <person name="Ben-Neriah Y."/>
            <person name="Pagano M."/>
        </authorList>
    </citation>
    <scope>FUNCTION</scope>
    <scope>ACTIVITY REGULATION</scope>
    <scope>PHOSPHORYLATION AT SER-286; SER-287 AND SER-291</scope>
    <scope>UBIQUITINATION</scope>
    <scope>MUTAGENESIS OF 286-SER--SER-291; SER-286; SER-287 AND SER-291</scope>
</reference>
<reference key="12">
    <citation type="journal article" date="2012" name="Proc. Natl. Acad. Sci. U.S.A.">
        <title>N-terminal acetylome analyses and functional insights of the N-terminal acetyltransferase NatB.</title>
        <authorList>
            <person name="Van Damme P."/>
            <person name="Lasa M."/>
            <person name="Polevoda B."/>
            <person name="Gazquez C."/>
            <person name="Elosegui-Artola A."/>
            <person name="Kim D.S."/>
            <person name="De Juan-Pardo E."/>
            <person name="Demeyer K."/>
            <person name="Hole K."/>
            <person name="Larrea E."/>
            <person name="Timmerman E."/>
            <person name="Prieto J."/>
            <person name="Arnesen T."/>
            <person name="Sherman F."/>
            <person name="Gevaert K."/>
            <person name="Aldabe R."/>
        </authorList>
    </citation>
    <scope>ACETYLATION [LARGE SCALE ANALYSIS] AT MET-1</scope>
    <scope>IDENTIFICATION BY MASS SPECTROMETRY [LARGE SCALE ANALYSIS]</scope>
</reference>
<reference key="13">
    <citation type="journal article" date="2013" name="J. Proteome Res.">
        <title>Toward a comprehensive characterization of a human cancer cell phosphoproteome.</title>
        <authorList>
            <person name="Zhou H."/>
            <person name="Di Palma S."/>
            <person name="Preisinger C."/>
            <person name="Peng M."/>
            <person name="Polat A.N."/>
            <person name="Heck A.J."/>
            <person name="Mohammed S."/>
        </authorList>
    </citation>
    <scope>PHOSPHORYLATION [LARGE SCALE ANALYSIS] AT SER-244</scope>
    <scope>IDENTIFICATION BY MASS SPECTROMETRY [LARGE SCALE ANALYSIS]</scope>
    <source>
        <tissue>Cervix carcinoma</tissue>
    </source>
</reference>
<reference key="14">
    <citation type="journal article" date="2014" name="J. Proteomics">
        <title>An enzyme assisted RP-RPLC approach for in-depth analysis of human liver phosphoproteome.</title>
        <authorList>
            <person name="Bian Y."/>
            <person name="Song C."/>
            <person name="Cheng K."/>
            <person name="Dong M."/>
            <person name="Wang F."/>
            <person name="Huang J."/>
            <person name="Sun D."/>
            <person name="Wang L."/>
            <person name="Ye M."/>
            <person name="Zou H."/>
        </authorList>
    </citation>
    <scope>IDENTIFICATION BY MASS SPECTROMETRY [LARGE SCALE ANALYSIS]</scope>
    <source>
        <tissue>Liver</tissue>
    </source>
</reference>
<reference key="15">
    <citation type="journal article" date="2015" name="Mol. Cell">
        <title>Rapid mitogenic regulation of the mTORC1 inhibitor, DEPTOR, by phosphatidic acid.</title>
        <authorList>
            <person name="Yoon M.S."/>
            <person name="Rosenberger C.L."/>
            <person name="Wu C."/>
            <person name="Truong N."/>
            <person name="Sweedler J.V."/>
            <person name="Chen J."/>
        </authorList>
    </citation>
    <scope>FUNCTION</scope>
    <scope>ACTIVITY REGULATION</scope>
    <scope>IDENTIFICATION IN THE MTORC1 COMPLEX</scope>
    <scope>SUBCELLULAR LOCATION</scope>
    <scope>MUTAGENESIS OF THR-241; SER-244; SER-258; THR-259; SER-263; SER-265; SER-282; SER-283; SER-287; SER-293; SER-297; SER-298 AND SER-299</scope>
</reference>
<reference key="16">
    <citation type="journal article" date="2018" name="J. Biol. Chem.">
        <title>OTUB1 protein suppresses mTOR complex 1 (mTORC1) activity by deubiquitinating the mTORC1 inhibitor DEPTOR.</title>
        <authorList>
            <person name="Zhao L."/>
            <person name="Wang X."/>
            <person name="Yu Y."/>
            <person name="Deng L."/>
            <person name="Chen L."/>
            <person name="Peng X."/>
            <person name="Jiao C."/>
            <person name="Gao G."/>
            <person name="Tan X."/>
            <person name="Pan W."/>
            <person name="Ge X."/>
            <person name="Wang P."/>
        </authorList>
    </citation>
    <scope>FUNCTION</scope>
    <scope>DEUBIQUITINATION</scope>
</reference>
<reference key="17">
    <citation type="journal article" date="2018" name="PLoS Genet.">
        <title>UBTOR/KIAA1024 regulates neurite outgrowth and neoplasia through mTOR signaling.</title>
        <authorList>
            <person name="Zhang H."/>
            <person name="Zhang Q."/>
            <person name="Gao G."/>
            <person name="Wang X."/>
            <person name="Wang T."/>
            <person name="Kong Z."/>
            <person name="Wang G."/>
            <person name="Zhang C."/>
            <person name="Wang Y."/>
            <person name="Peng G."/>
        </authorList>
    </citation>
    <scope>INTERACTION WITH MINAR1</scope>
    <scope>UBIQUITINATION</scope>
</reference>
<reference key="18">
    <citation type="journal article" date="2018" name="Sci. Transl. Med.">
        <title>The PTH/PTHrP-SIK3 pathway affects skeletogenesis through altered mTOR signaling.</title>
        <authorList>
            <person name="Csukasi F."/>
            <person name="Duran I."/>
            <person name="Barad M."/>
            <person name="Barta T."/>
            <person name="Gudernova I."/>
            <person name="Trantirek L."/>
            <person name="Martin J.H."/>
            <person name="Kuo C.Y."/>
            <person name="Woods J."/>
            <person name="Lee H."/>
            <person name="Cohn D.H."/>
            <person name="Krejci P."/>
            <person name="Krakow D."/>
        </authorList>
    </citation>
    <scope>INTERACTION WITH SIK3</scope>
</reference>
<reference key="19">
    <citation type="journal article" date="2021" name="Cell Death Differ.">
        <title>Deubiquitinase OTUD5 is a positive regulator of mTORC1 and mTORC2 signaling pathways.</title>
        <authorList>
            <person name="Cho J.H."/>
            <person name="Kim K."/>
            <person name="Kim S.A."/>
            <person name="Park S."/>
            <person name="Park B.O."/>
            <person name="Kim J.H."/>
            <person name="Kim S.Y."/>
            <person name="Kwon M.J."/>
            <person name="Han M.H."/>
            <person name="Lee S.B."/>
            <person name="Park B.C."/>
            <person name="Park S.G."/>
            <person name="Kim J.H."/>
            <person name="Kim S."/>
        </authorList>
    </citation>
    <scope>UBIQUITINATION</scope>
</reference>
<reference key="20">
    <citation type="journal article" date="2021" name="J. Biol. Chem.">
        <title>Tyrosine phosphorylation of DEPTOR functions as a molecular switch to activate mTOR signaling.</title>
        <authorList>
            <person name="M Gagne L."/>
            <person name="Morin N."/>
            <person name="Lavoie N."/>
            <person name="Bisson N."/>
            <person name="Lambert J.P."/>
            <person name="Mallette F.A."/>
            <person name="Huot M.E."/>
        </authorList>
    </citation>
    <scope>PHOSPHORYLATION AT TYR-289</scope>
    <scope>MUTAGENESIS OF TYR-289 AND TYR-326</scope>
</reference>
<reference key="21">
    <citation type="journal article" date="2022" name="J. Biol. Chem.">
        <title>Turnover of the mTOR inhibitor, DEPTOR, and downstream AKT phosphorylation in multiple myeloma cells, is dependent on ERK1-mediated phosphorylation.</title>
        <authorList>
            <person name="Vega M."/>
            <person name="Chen Y."/>
            <person name="Shi Y."/>
            <person name="Gera J."/>
            <person name="Lichtenstein A."/>
        </authorList>
    </citation>
    <scope>PHOSPHORYLATION AT SER-235</scope>
    <scope>DEUBIQUITINATION</scope>
    <scope>MUTAGENESIS OF SER-235</scope>
</reference>
<reference evidence="29" key="22">
    <citation type="journal article" date="2021" name="J. Mol. Biol.">
        <title>Structural basis of DEPTOR to recognize phosphatidic acid using its tandem DEP domains.</title>
        <authorList>
            <person name="Weng Z."/>
            <person name="Shen X."/>
            <person name="Zheng J."/>
            <person name="Liang H."/>
            <person name="Liu Y."/>
        </authorList>
    </citation>
    <scope>X-RAY CRYSTALLOGRAPHY (1.50 ANGSTROMS) OF 21-235</scope>
    <scope>ACTIVITY REGULATION</scope>
    <scope>MUTAGENESIS OF ARG-53; ARG-54; LYS-58; ARG-225 AND LEU-231</scope>
</reference>
<reference evidence="31 32 33 34 35 36 37" key="23">
    <citation type="journal article" date="2021" name="Elife">
        <title>Regulation of human mTOR complexes by DEPTOR.</title>
        <authorList>
            <person name="Waelchli M."/>
            <person name="Berneiser K."/>
            <person name="Mangia F."/>
            <person name="Imseng S."/>
            <person name="Craigie L.M."/>
            <person name="Stuttfeld E."/>
            <person name="Hall M.N."/>
            <person name="Maier T."/>
        </authorList>
    </citation>
    <scope>X-RAY CRYSTALLOGRAPHY (1.93 ANGSTROMS) OF 1-230 IN COMPLEX WITH DEPTOR; MLST8; MAPKAP1; RICTOR AND RPTOR</scope>
    <scope>FUNCTION</scope>
    <scope>IDENTIFICATION IN THE MTORC1 COMPLEX</scope>
    <scope>IDENTIFICATION IN THE MTORC2 COMPLEX</scope>
</reference>
<reference evidence="30" key="24">
    <citation type="journal article" date="2021" name="Elife">
        <title>Bipartite binding and partial inhibition links DEPTOR and mTOR in a mutually antagonistic embrace.</title>
        <authorList>
            <person name="Heimhalt M."/>
            <person name="Berndt A."/>
            <person name="Wagstaff J."/>
            <person name="Anandapadamanaban M."/>
            <person name="Perisic O."/>
            <person name="Maslen S."/>
            <person name="McLaughlin S."/>
            <person name="Yu C.W."/>
            <person name="Masson G.R."/>
            <person name="Boland A."/>
            <person name="Ni X."/>
            <person name="Yamashita K."/>
            <person name="Murshudov G.N."/>
            <person name="Skehel M."/>
            <person name="Freund S.M."/>
            <person name="Williams R.L."/>
        </authorList>
    </citation>
    <scope>STRUCTURE BY ELECTRON MICROSCOPY (4.70 ANGSTROMS) IN COMPLEX WITH MTOR; MLST8 AND RPTOR</scope>
    <scope>FUNCTION</scope>
    <scope>IDENTIFICATION IN THE MTORC1 COMPLEX</scope>
</reference>
<evidence type="ECO:0000250" key="1">
    <source>
        <dbReference type="UniProtKB" id="Q570Y9"/>
    </source>
</evidence>
<evidence type="ECO:0000255" key="2">
    <source>
        <dbReference type="PROSITE-ProRule" id="PRU00066"/>
    </source>
</evidence>
<evidence type="ECO:0000255" key="3">
    <source>
        <dbReference type="PROSITE-ProRule" id="PRU00143"/>
    </source>
</evidence>
<evidence type="ECO:0000256" key="4">
    <source>
        <dbReference type="SAM" id="MobiDB-lite"/>
    </source>
</evidence>
<evidence type="ECO:0000269" key="5">
    <source>
    </source>
</evidence>
<evidence type="ECO:0000269" key="6">
    <source>
    </source>
</evidence>
<evidence type="ECO:0000269" key="7">
    <source>
    </source>
</evidence>
<evidence type="ECO:0000269" key="8">
    <source>
    </source>
</evidence>
<evidence type="ECO:0000269" key="9">
    <source>
    </source>
</evidence>
<evidence type="ECO:0000269" key="10">
    <source>
    </source>
</evidence>
<evidence type="ECO:0000269" key="11">
    <source>
    </source>
</evidence>
<evidence type="ECO:0000269" key="12">
    <source>
    </source>
</evidence>
<evidence type="ECO:0000269" key="13">
    <source>
    </source>
</evidence>
<evidence type="ECO:0000269" key="14">
    <source>
    </source>
</evidence>
<evidence type="ECO:0000269" key="15">
    <source>
    </source>
</evidence>
<evidence type="ECO:0000269" key="16">
    <source>
    </source>
</evidence>
<evidence type="ECO:0000269" key="17">
    <source>
    </source>
</evidence>
<evidence type="ECO:0000269" key="18">
    <source>
    </source>
</evidence>
<evidence type="ECO:0000269" key="19">
    <source>
    </source>
</evidence>
<evidence type="ECO:0000269" key="20">
    <source>
    </source>
</evidence>
<evidence type="ECO:0000269" key="21">
    <source>
    </source>
</evidence>
<evidence type="ECO:0000303" key="22">
    <source>
    </source>
</evidence>
<evidence type="ECO:0000303" key="23">
    <source>
    </source>
</evidence>
<evidence type="ECO:0000303" key="24">
    <source>
    </source>
</evidence>
<evidence type="ECO:0000303" key="25">
    <source>
    </source>
</evidence>
<evidence type="ECO:0000305" key="26"/>
<evidence type="ECO:0000305" key="27">
    <source>
    </source>
</evidence>
<evidence type="ECO:0000312" key="28">
    <source>
        <dbReference type="HGNC" id="HGNC:22953"/>
    </source>
</evidence>
<evidence type="ECO:0007744" key="29">
    <source>
        <dbReference type="PDB" id="7DKL"/>
    </source>
</evidence>
<evidence type="ECO:0007744" key="30">
    <source>
        <dbReference type="PDB" id="7OWG"/>
    </source>
</evidence>
<evidence type="ECO:0007744" key="31">
    <source>
        <dbReference type="PDB" id="7PE7"/>
    </source>
</evidence>
<evidence type="ECO:0007744" key="32">
    <source>
        <dbReference type="PDB" id="7PE8"/>
    </source>
</evidence>
<evidence type="ECO:0007744" key="33">
    <source>
        <dbReference type="PDB" id="7PE9"/>
    </source>
</evidence>
<evidence type="ECO:0007744" key="34">
    <source>
        <dbReference type="PDB" id="7PEA"/>
    </source>
</evidence>
<evidence type="ECO:0007744" key="35">
    <source>
        <dbReference type="PDB" id="7PEB"/>
    </source>
</evidence>
<evidence type="ECO:0007744" key="36">
    <source>
        <dbReference type="PDB" id="7PEC"/>
    </source>
</evidence>
<evidence type="ECO:0007744" key="37">
    <source>
        <dbReference type="PDB" id="7PED"/>
    </source>
</evidence>
<evidence type="ECO:0007744" key="38">
    <source>
    </source>
</evidence>
<evidence type="ECO:0007744" key="39">
    <source>
    </source>
</evidence>
<evidence type="ECO:0007744" key="40">
    <source>
    </source>
</evidence>
<evidence type="ECO:0007829" key="41">
    <source>
        <dbReference type="PDB" id="7DKL"/>
    </source>
</evidence>
<evidence type="ECO:0007829" key="42">
    <source>
        <dbReference type="PDB" id="7PE7"/>
    </source>
</evidence>
<evidence type="ECO:0007829" key="43">
    <source>
        <dbReference type="PDB" id="7PE8"/>
    </source>
</evidence>
<evidence type="ECO:0007829" key="44">
    <source>
        <dbReference type="PDB" id="7PED"/>
    </source>
</evidence>
<feature type="chain" id="PRO_0000284784" description="DEP domain-containing mTOR-interacting protein">
    <location>
        <begin position="1"/>
        <end position="409"/>
    </location>
</feature>
<feature type="domain" description="DEP 1" evidence="2">
    <location>
        <begin position="36"/>
        <end position="119"/>
    </location>
</feature>
<feature type="domain" description="DEP 2" evidence="2">
    <location>
        <begin position="145"/>
        <end position="219"/>
    </location>
</feature>
<feature type="domain" description="PDZ" evidence="3">
    <location>
        <begin position="330"/>
        <end position="407"/>
    </location>
</feature>
<feature type="region of interest" description="Disordered" evidence="4">
    <location>
        <begin position="1"/>
        <end position="25"/>
    </location>
</feature>
<feature type="short sequence motif" description="DDEX motif" evidence="17">
    <location>
        <begin position="217"/>
        <end position="235"/>
    </location>
</feature>
<feature type="short sequence motif" description="BetaTrCP degron motif" evidence="11">
    <location>
        <begin position="286"/>
        <end position="291"/>
    </location>
</feature>
<feature type="modified residue" description="N-acetylmethionine" evidence="38 39">
    <location>
        <position position="1"/>
    </location>
</feature>
<feature type="modified residue" description="Phosphoserine; by MAPK3" evidence="21">
    <location>
        <position position="235"/>
    </location>
</feature>
<feature type="modified residue" description="Phosphothreonine" evidence="8">
    <location>
        <position position="241"/>
    </location>
</feature>
<feature type="modified residue" description="Phosphoserine" evidence="8 40">
    <location>
        <position position="244"/>
    </location>
</feature>
<feature type="modified residue" description="Phosphoserine" evidence="8">
    <location>
        <position position="258"/>
    </location>
</feature>
<feature type="modified residue" description="Phosphothreonine" evidence="8">
    <location>
        <position position="259"/>
    </location>
</feature>
<feature type="modified residue" description="Phosphoserine" evidence="8">
    <location>
        <position position="263"/>
    </location>
</feature>
<feature type="modified residue" description="Phosphoserine" evidence="8 9">
    <location>
        <position position="265"/>
    </location>
</feature>
<feature type="modified residue" description="Phosphoserine" evidence="1">
    <location>
        <position position="280"/>
    </location>
</feature>
<feature type="modified residue" description="Phosphoserine" evidence="8">
    <location>
        <position position="282"/>
    </location>
</feature>
<feature type="modified residue" description="Phosphoserine" evidence="8">
    <location>
        <position position="283"/>
    </location>
</feature>
<feature type="modified residue" description="Phosphoserine; by CK1" evidence="9 10 11">
    <location>
        <position position="286"/>
    </location>
</feature>
<feature type="modified residue" description="Phosphoserine; by CK1" evidence="8 9 10 11">
    <location>
        <position position="287"/>
    </location>
</feature>
<feature type="modified residue" description="Phosphotyrosine; by SYK" evidence="20">
    <location>
        <position position="289"/>
    </location>
</feature>
<feature type="modified residue" description="Phosphoserine; by CK1" evidence="10 11">
    <location>
        <position position="291"/>
    </location>
</feature>
<feature type="modified residue" description="Phosphoserine; by MTOR" evidence="8 9">
    <location>
        <position position="293"/>
    </location>
</feature>
<feature type="modified residue" description="Phosphothreonine; by MTOR" evidence="9">
    <location>
        <position position="295"/>
    </location>
</feature>
<feature type="modified residue" description="Phosphoserine" evidence="8">
    <location>
        <position position="297"/>
    </location>
</feature>
<feature type="modified residue" description="Phosphoserine" evidence="8">
    <location>
        <position position="298"/>
    </location>
</feature>
<feature type="modified residue" description="Phosphoserine; by MTOR" evidence="8 9">
    <location>
        <position position="299"/>
    </location>
</feature>
<feature type="splice variant" id="VSP_054681" description="In isoform 2." evidence="22">
    <location>
        <begin position="42"/>
        <end position="142"/>
    </location>
</feature>
<feature type="sequence variant" id="VAR_031816" description="In dbSNP:rs34057546.">
    <original>N</original>
    <variation>S</variation>
    <location>
        <position position="148"/>
    </location>
</feature>
<feature type="sequence variant" id="VAR_031817" description="In dbSNP:rs2271900." evidence="5 6 7">
    <original>N</original>
    <variation>S</variation>
    <location>
        <position position="204"/>
    </location>
</feature>
<feature type="sequence variant" id="VAR_031818" description="In dbSNP:rs4871827." evidence="6 7">
    <original>S</original>
    <variation>N</variation>
    <location>
        <position position="389"/>
    </location>
</feature>
<feature type="mutagenesis site" description="Decreased phosphatidic acid-binding." evidence="17">
    <original>R</original>
    <variation>A</variation>
    <location>
        <position position="53"/>
    </location>
</feature>
<feature type="mutagenesis site" description="Decreased phosphatidic acid-binding." evidence="17">
    <original>R</original>
    <variation>A</variation>
    <location>
        <position position="54"/>
    </location>
</feature>
<feature type="mutagenesis site" description="Decreased phosphatidic acid-binding." evidence="17">
    <original>K</original>
    <variation>A</variation>
    <location>
        <position position="58"/>
    </location>
</feature>
<feature type="mutagenesis site" description="Decreased phosphatidic acid-binding." evidence="17">
    <original>R</original>
    <variation>A</variation>
    <location>
        <position position="225"/>
    </location>
</feature>
<feature type="mutagenesis site" description="Decreased phosphatidic acid-binding." evidence="17">
    <original>L</original>
    <variation>D</variation>
    <location>
        <position position="231"/>
    </location>
</feature>
<feature type="mutagenesis site" description="Decreased phosphorylation, leading to impaired deubiquitination by USP7." evidence="21">
    <original>S</original>
    <variation>A</variation>
    <location>
        <position position="235"/>
    </location>
</feature>
<feature type="mutagenesis site" description="Mimics phosphorylation, leading to slightly increased stability." evidence="21">
    <original>S</original>
    <variation>D</variation>
    <location>
        <position position="235"/>
    </location>
</feature>
<feature type="mutagenesis site" description="In mutant 13A; abolished phosphorylation, leading to promote interaction with MTOR without affecting ability to bind phosphatidic acid; when associated with A-244, A-258, A-259, A-263, A-265, A-282, A-283, A-287, A-293, A-297, A-298 and A-299." evidence="8 12">
    <original>T</original>
    <variation>A</variation>
    <location>
        <position position="241"/>
    </location>
</feature>
<feature type="mutagenesis site" description="In mutant 13A; abolished phosphorylation, leading to promote interaction with MTOR without affecting ability to bind phosphatidic acid; when associated with A-241, A-258, A-259, A-263, A-265, A-282, A-283, A-287, A-293, A-297, A-298 and A-299." evidence="8 12">
    <original>S</original>
    <variation>A</variation>
    <location>
        <position position="244"/>
    </location>
</feature>
<feature type="mutagenesis site" description="In mutant 13A; abolished phosphorylation, leading to promote interaction with MTOR without affecting ability to bind phosphatidic acid; when associated with A-241, A-244, A-259, A-263, A-265, A-282, A-283, A-287, A-293, A-297, A-298 and A-299." evidence="8 12">
    <original>S</original>
    <variation>A</variation>
    <location>
        <position position="258"/>
    </location>
</feature>
<feature type="mutagenesis site" description="In mutant 13A; abolished phosphorylation, leading to promote interaction with MTOR without affecting ability to bind phosphatidic acid; when associated with A-241, A-244, A-258, A-263, A-265, A-282, A-283, A-287, A-293, A-297, A-298 and A-299." evidence="8 12">
    <original>T</original>
    <variation>A</variation>
    <location>
        <position position="259"/>
    </location>
</feature>
<feature type="mutagenesis site" description="In mutant 13A; abolished phosphorylation, leading to promote interaction with MTOR without affecting ability to bind phosphatidic acid; when associated with A-241, A-244, A-258, A-259, A-265, A-282, A-283, A-287, A-293, A-297, A-298 and A-299." evidence="8 12">
    <original>S</original>
    <variation>A</variation>
    <location>
        <position position="263"/>
    </location>
</feature>
<feature type="mutagenesis site" description="In mutant 13A; abolished phosphorylation, leading to promote interaction with MTOR without affecting ability to bind phosphatidic acid; when associated with A-241, A-244, A-258, A-259, A-263, A-282, A-283, A-287, A-293, A-297, A-298 and A-299." evidence="8 12">
    <original>S</original>
    <variation>A</variation>
    <location>
        <position position="265"/>
    </location>
</feature>
<feature type="mutagenesis site" description="In mutant 13A; abolished phosphorylation, leading to promote interaction with MTOR without affecting ability to bind phosphatidic acid; when associated with A-241, A-244, A-258, A-259, A-263, A-265, A-283, A-287, A-293, A-297, A-298 and A-299." evidence="8 12">
    <original>S</original>
    <variation>A</variation>
    <location>
        <position position="282"/>
    </location>
</feature>
<feature type="mutagenesis site" description="In mutant 13A; abolished phosphorylation, leading to promote interaction with MTOR without affecting ability to bind phosphatidic acid; when associated with A-241, A-244, A-258, A-259, A-263, A-265, A-282, A-287, A-293, A-297, A-298 and A-299." evidence="8 12">
    <original>S</original>
    <variation>A</variation>
    <location>
        <position position="283"/>
    </location>
</feature>
<feature type="mutagenesis site" description="Mimics phosphorylation; promoting association with the SCF(BTRC) complex." evidence="11">
    <original>SSGYFS</original>
    <variation>DDGYFD</variation>
    <location>
        <begin position="286"/>
        <end position="291"/>
    </location>
</feature>
<feature type="mutagenesis site" description="Reduced ubiquitination by the SCF(BTRC) complex." evidence="9 10 11">
    <original>S</original>
    <variation>A</variation>
    <location>
        <position position="286"/>
    </location>
</feature>
<feature type="mutagenesis site" description="In mutant 13A; abolished phosphorylation, leading to promote interaction with MTOR without affecting ability to bind phosphatidic acid; when associated with A-241, A-244, A-258, A-259, A-263, A-265, A-282, A-283, A-293, A-297, A-298 and A-299. Reduced ubiquitination by the SCF(BTRC) complex." evidence="8 10 11 12">
    <original>S</original>
    <variation>A</variation>
    <location>
        <position position="287"/>
    </location>
</feature>
<feature type="mutagenesis site" description="Mimics phosphorylation, leading to slightly decreased interaction with MTOR." evidence="20">
    <original>Y</original>
    <variation>E</variation>
    <location>
        <position position="289"/>
    </location>
</feature>
<feature type="mutagenesis site" description="Decreased phosphorylation, leading to increased interaction with MTOR." evidence="20">
    <original>Y</original>
    <variation>F</variation>
    <location>
        <position position="289"/>
    </location>
</feature>
<feature type="mutagenesis site" description="Reduced ubiquitination by the SCF(BTRC) complex." evidence="10 11">
    <original>S</original>
    <variation>A</variation>
    <location>
        <position position="291"/>
    </location>
</feature>
<feature type="mutagenesis site" description="In mutant 13A; abolished phosphorylation, leading to promote interaction with MTOR without affecting ability to bind phosphatidic acid; when associated with A-241, A-244, A-258, A-259, A-263, A-265, A-282, A-283, A-287, A-297, A-298 and A-299. Reduced ubiquitination by the SCF(BTRC) complex." evidence="8 9 12">
    <original>S</original>
    <variation>A</variation>
    <location>
        <position position="293"/>
    </location>
</feature>
<feature type="mutagenesis site" description="Reduced ubiquitination by the SCF(BTRC) complex." evidence="9">
    <original>TLSSS</original>
    <variation>ALSSA</variation>
    <location>
        <begin position="295"/>
        <end position="299"/>
    </location>
</feature>
<feature type="mutagenesis site" description="In mutant 13A; abolished phosphorylation, leading to promote interaction with MTOR without affecting ability to bind phosphatidic acid; when associated with A-241, A-244, A-258, A-259, A-263, A-265, A-282, A-283, A-287, A-293, A-298 and A-299." evidence="8 12">
    <original>S</original>
    <variation>A</variation>
    <location>
        <position position="297"/>
    </location>
</feature>
<feature type="mutagenesis site" description="In mutant 13A; abolished phosphorylation, leading to promote interaction with MTOR without affecting ability to bind phosphatidic acid; when associated with A-241, A-244, A-258, A-259, A-263, A-265, A-282, A-283, A-287, A-293, A-297 and A-299." evidence="8 12">
    <original>S</original>
    <variation>A</variation>
    <location>
        <position position="298"/>
    </location>
</feature>
<feature type="mutagenesis site" description="In mutant 13A; abolished phosphorylation, leading to promote interaction with MTOR without affecting ability to bind phosphatidic acid; when associated with A-241, A-244, A-258, A-259, A-263, A-265, A-282, A-283, A-287, A-293, A-297 and A-298." evidence="8 12">
    <original>S</original>
    <variation>A</variation>
    <location>
        <position position="299"/>
    </location>
</feature>
<feature type="mutagenesis site" description="Does not affect phosphorylation." evidence="20">
    <original>Y</original>
    <variation>F</variation>
    <location>
        <position position="326"/>
    </location>
</feature>
<feature type="sequence conflict" description="In Ref. 2; BAB14054." evidence="26" ref="2">
    <original>M</original>
    <variation>V</variation>
    <location>
        <position position="166"/>
    </location>
</feature>
<feature type="sequence conflict" description="In Ref. 1; CAB66613." evidence="26" ref="1">
    <original>R</original>
    <variation>G</variation>
    <location>
        <position position="249"/>
    </location>
</feature>
<feature type="helix" evidence="41">
    <location>
        <begin position="22"/>
        <end position="46"/>
    </location>
</feature>
<feature type="strand" evidence="41">
    <location>
        <begin position="49"/>
        <end position="55"/>
    </location>
</feature>
<feature type="strand" evidence="41">
    <location>
        <begin position="58"/>
        <end position="65"/>
    </location>
</feature>
<feature type="helix" evidence="41">
    <location>
        <begin position="66"/>
        <end position="75"/>
    </location>
</feature>
<feature type="strand" evidence="44">
    <location>
        <begin position="78"/>
        <end position="81"/>
    </location>
</feature>
<feature type="helix" evidence="41">
    <location>
        <begin position="82"/>
        <end position="94"/>
    </location>
</feature>
<feature type="strand" evidence="41">
    <location>
        <begin position="97"/>
        <end position="100"/>
    </location>
</feature>
<feature type="strand" evidence="41">
    <location>
        <begin position="110"/>
        <end position="112"/>
    </location>
</feature>
<feature type="strand" evidence="41">
    <location>
        <begin position="114"/>
        <end position="117"/>
    </location>
</feature>
<feature type="helix" evidence="41">
    <location>
        <begin position="118"/>
        <end position="121"/>
    </location>
</feature>
<feature type="helix" evidence="41">
    <location>
        <begin position="128"/>
        <end position="143"/>
    </location>
</feature>
<feature type="strand" evidence="41">
    <location>
        <begin position="152"/>
        <end position="156"/>
    </location>
</feature>
<feature type="strand" evidence="41">
    <location>
        <begin position="159"/>
        <end position="166"/>
    </location>
</feature>
<feature type="helix" evidence="41">
    <location>
        <begin position="167"/>
        <end position="176"/>
    </location>
</feature>
<feature type="helix" evidence="41">
    <location>
        <begin position="183"/>
        <end position="195"/>
    </location>
</feature>
<feature type="strand" evidence="41">
    <location>
        <begin position="198"/>
        <end position="204"/>
    </location>
</feature>
<feature type="strand" evidence="41">
    <location>
        <begin position="210"/>
        <end position="212"/>
    </location>
</feature>
<feature type="strand" evidence="41">
    <location>
        <begin position="214"/>
        <end position="217"/>
    </location>
</feature>
<feature type="helix" evidence="41">
    <location>
        <begin position="227"/>
        <end position="231"/>
    </location>
</feature>
<feature type="helix" evidence="43">
    <location>
        <begin position="316"/>
        <end position="320"/>
    </location>
</feature>
<feature type="strand" evidence="42">
    <location>
        <begin position="324"/>
        <end position="326"/>
    </location>
</feature>
<feature type="strand" evidence="43">
    <location>
        <begin position="329"/>
        <end position="333"/>
    </location>
</feature>
<feature type="strand" evidence="43">
    <location>
        <begin position="342"/>
        <end position="344"/>
    </location>
</feature>
<feature type="strand" evidence="43">
    <location>
        <begin position="347"/>
        <end position="349"/>
    </location>
</feature>
<feature type="strand" evidence="43">
    <location>
        <begin position="351"/>
        <end position="355"/>
    </location>
</feature>
<feature type="helix" evidence="43">
    <location>
        <begin position="360"/>
        <end position="363"/>
    </location>
</feature>
<feature type="strand" evidence="42">
    <location>
        <begin position="371"/>
        <end position="375"/>
    </location>
</feature>
<feature type="strand" evidence="43">
    <location>
        <begin position="381"/>
        <end position="383"/>
    </location>
</feature>
<feature type="helix" evidence="43">
    <location>
        <begin position="385"/>
        <end position="394"/>
    </location>
</feature>
<feature type="strand" evidence="43">
    <location>
        <begin position="397"/>
        <end position="403"/>
    </location>
</feature>
<keyword id="KW-0002">3D-structure</keyword>
<keyword id="KW-0007">Acetylation</keyword>
<keyword id="KW-0025">Alternative splicing</keyword>
<keyword id="KW-0446">Lipid-binding</keyword>
<keyword id="KW-0458">Lysosome</keyword>
<keyword id="KW-0472">Membrane</keyword>
<keyword id="KW-0597">Phosphoprotein</keyword>
<keyword id="KW-1267">Proteomics identification</keyword>
<keyword id="KW-1185">Reference proteome</keyword>
<keyword id="KW-0677">Repeat</keyword>
<keyword id="KW-0832">Ubl conjugation</keyword>
<dbReference type="EMBL" id="AL136678">
    <property type="protein sequence ID" value="CAB66613.1"/>
    <property type="molecule type" value="mRNA"/>
</dbReference>
<dbReference type="EMBL" id="AK022490">
    <property type="protein sequence ID" value="BAB14054.1"/>
    <property type="molecule type" value="mRNA"/>
</dbReference>
<dbReference type="EMBL" id="AK023916">
    <property type="protein sequence ID" value="BAB14723.1"/>
    <property type="status" value="ALT_INIT"/>
    <property type="molecule type" value="mRNA"/>
</dbReference>
<dbReference type="EMBL" id="AK297822">
    <property type="protein sequence ID" value="BAG60159.1"/>
    <property type="molecule type" value="mRNA"/>
</dbReference>
<dbReference type="EMBL" id="AK315175">
    <property type="protein sequence ID" value="BAG37616.1"/>
    <property type="molecule type" value="mRNA"/>
</dbReference>
<dbReference type="EMBL" id="AC091563">
    <property type="status" value="NOT_ANNOTATED_CDS"/>
    <property type="molecule type" value="Genomic_DNA"/>
</dbReference>
<dbReference type="EMBL" id="AP005717">
    <property type="status" value="NOT_ANNOTATED_CDS"/>
    <property type="molecule type" value="Genomic_DNA"/>
</dbReference>
<dbReference type="EMBL" id="CH471060">
    <property type="protein sequence ID" value="EAW91997.1"/>
    <property type="molecule type" value="Genomic_DNA"/>
</dbReference>
<dbReference type="EMBL" id="BC012040">
    <property type="protein sequence ID" value="AAH12040.1"/>
    <property type="molecule type" value="mRNA"/>
</dbReference>
<dbReference type="EMBL" id="BC024746">
    <property type="protein sequence ID" value="AAH24746.1"/>
    <property type="molecule type" value="mRNA"/>
</dbReference>
<dbReference type="CCDS" id="CCDS6331.1">
    <molecule id="Q8TB45-1"/>
</dbReference>
<dbReference type="CCDS" id="CCDS64960.1">
    <molecule id="Q8TB45-2"/>
</dbReference>
<dbReference type="RefSeq" id="NP_001269941.1">
    <molecule id="Q8TB45-2"/>
    <property type="nucleotide sequence ID" value="NM_001283012.2"/>
</dbReference>
<dbReference type="RefSeq" id="NP_073620.2">
    <molecule id="Q8TB45-1"/>
    <property type="nucleotide sequence ID" value="NM_022783.4"/>
</dbReference>
<dbReference type="PDB" id="7DKL">
    <property type="method" value="X-ray"/>
    <property type="resolution" value="1.50 A"/>
    <property type="chains" value="A=21-235"/>
</dbReference>
<dbReference type="PDB" id="7OWG">
    <property type="method" value="EM"/>
    <property type="resolution" value="4.70 A"/>
    <property type="chains" value="O=1-409"/>
</dbReference>
<dbReference type="PDB" id="7PE7">
    <property type="method" value="EM"/>
    <property type="resolution" value="3.41 A"/>
    <property type="chains" value="I/J=1-409"/>
</dbReference>
<dbReference type="PDB" id="7PE8">
    <property type="method" value="EM"/>
    <property type="resolution" value="3.20 A"/>
    <property type="chains" value="I=1-409"/>
</dbReference>
<dbReference type="PDB" id="7PE9">
    <property type="method" value="EM"/>
    <property type="resolution" value="3.70 A"/>
    <property type="chains" value="I=1-409"/>
</dbReference>
<dbReference type="PDB" id="7PEA">
    <property type="method" value="EM"/>
    <property type="resolution" value="4.07 A"/>
    <property type="chains" value="I/J=1-409"/>
</dbReference>
<dbReference type="PDB" id="7PEB">
    <property type="method" value="EM"/>
    <property type="resolution" value="3.67 A"/>
    <property type="chains" value="I=1-409"/>
</dbReference>
<dbReference type="PDB" id="7PEC">
    <property type="method" value="EM"/>
    <property type="resolution" value="4.24 A"/>
    <property type="chains" value="I=1-409"/>
</dbReference>
<dbReference type="PDB" id="7PED">
    <property type="method" value="X-ray"/>
    <property type="resolution" value="1.93 A"/>
    <property type="chains" value="A/B=1-230"/>
</dbReference>
<dbReference type="PDBsum" id="7DKL"/>
<dbReference type="PDBsum" id="7OWG"/>
<dbReference type="PDBsum" id="7PE7"/>
<dbReference type="PDBsum" id="7PE8"/>
<dbReference type="PDBsum" id="7PE9"/>
<dbReference type="PDBsum" id="7PEA"/>
<dbReference type="PDBsum" id="7PEB"/>
<dbReference type="PDBsum" id="7PEC"/>
<dbReference type="PDBsum" id="7PED"/>
<dbReference type="EMDB" id="EMD-13097"/>
<dbReference type="EMDB" id="EMD-13347"/>
<dbReference type="EMDB" id="EMD-13348"/>
<dbReference type="EMDB" id="EMD-13349"/>
<dbReference type="EMDB" id="EMD-13350"/>
<dbReference type="EMDB" id="EMD-13351"/>
<dbReference type="EMDB" id="EMD-13352"/>
<dbReference type="SMR" id="Q8TB45"/>
<dbReference type="BioGRID" id="122304">
    <property type="interactions" value="83"/>
</dbReference>
<dbReference type="FunCoup" id="Q8TB45">
    <property type="interactions" value="352"/>
</dbReference>
<dbReference type="IntAct" id="Q8TB45">
    <property type="interactions" value="12"/>
</dbReference>
<dbReference type="MINT" id="Q8TB45"/>
<dbReference type="STRING" id="9606.ENSP00000286234"/>
<dbReference type="BindingDB" id="Q8TB45"/>
<dbReference type="ChEMBL" id="CHEMBL4105866"/>
<dbReference type="GlyGen" id="Q8TB45">
    <property type="glycosylation" value="1 site, 1 O-linked glycan (1 site)"/>
</dbReference>
<dbReference type="iPTMnet" id="Q8TB45"/>
<dbReference type="PhosphoSitePlus" id="Q8TB45"/>
<dbReference type="BioMuta" id="DEPTOR"/>
<dbReference type="DMDM" id="251757257"/>
<dbReference type="jPOST" id="Q8TB45"/>
<dbReference type="MassIVE" id="Q8TB45"/>
<dbReference type="PaxDb" id="9606-ENSP00000286234"/>
<dbReference type="PeptideAtlas" id="Q8TB45"/>
<dbReference type="ProteomicsDB" id="18583"/>
<dbReference type="ProteomicsDB" id="73961">
    <molecule id="Q8TB45-1"/>
</dbReference>
<dbReference type="Pumba" id="Q8TB45"/>
<dbReference type="Antibodypedia" id="13704">
    <property type="antibodies" value="269 antibodies from 32 providers"/>
</dbReference>
<dbReference type="DNASU" id="64798"/>
<dbReference type="Ensembl" id="ENST00000286234.6">
    <molecule id="Q8TB45-1"/>
    <property type="protein sequence ID" value="ENSP00000286234.5"/>
    <property type="gene ID" value="ENSG00000155792.10"/>
</dbReference>
<dbReference type="Ensembl" id="ENST00000523492.5">
    <molecule id="Q8TB45-2"/>
    <property type="protein sequence ID" value="ENSP00000430457.1"/>
    <property type="gene ID" value="ENSG00000155792.10"/>
</dbReference>
<dbReference type="GeneID" id="64798"/>
<dbReference type="KEGG" id="hsa:64798"/>
<dbReference type="MANE-Select" id="ENST00000286234.6">
    <property type="protein sequence ID" value="ENSP00000286234.5"/>
    <property type="RefSeq nucleotide sequence ID" value="NM_022783.4"/>
    <property type="RefSeq protein sequence ID" value="NP_073620.2"/>
</dbReference>
<dbReference type="UCSC" id="uc003yow.6">
    <molecule id="Q8TB45-1"/>
    <property type="organism name" value="human"/>
</dbReference>
<dbReference type="AGR" id="HGNC:22953"/>
<dbReference type="CTD" id="64798"/>
<dbReference type="DisGeNET" id="64798"/>
<dbReference type="GeneCards" id="DEPTOR"/>
<dbReference type="HGNC" id="HGNC:22953">
    <property type="gene designation" value="DEPTOR"/>
</dbReference>
<dbReference type="HPA" id="ENSG00000155792">
    <property type="expression patterns" value="Tissue enhanced (skeletal muscle, tongue)"/>
</dbReference>
<dbReference type="MIM" id="612974">
    <property type="type" value="gene"/>
</dbReference>
<dbReference type="neXtProt" id="NX_Q8TB45"/>
<dbReference type="OpenTargets" id="ENSG00000155792"/>
<dbReference type="PharmGKB" id="PA134897957"/>
<dbReference type="VEuPathDB" id="HostDB:ENSG00000155792"/>
<dbReference type="eggNOG" id="ENOG502QS4Y">
    <property type="taxonomic scope" value="Eukaryota"/>
</dbReference>
<dbReference type="GeneTree" id="ENSGT00520000055667"/>
<dbReference type="HOGENOM" id="CLU_042535_0_0_1"/>
<dbReference type="InParanoid" id="Q8TB45"/>
<dbReference type="OMA" id="HMAEILV"/>
<dbReference type="OrthoDB" id="39497at2759"/>
<dbReference type="PAN-GO" id="Q8TB45">
    <property type="GO annotations" value="0 GO annotations based on evolutionary models"/>
</dbReference>
<dbReference type="PhylomeDB" id="Q8TB45"/>
<dbReference type="PathwayCommons" id="Q8TB45"/>
<dbReference type="SignaLink" id="Q8TB45"/>
<dbReference type="SIGNOR" id="Q8TB45"/>
<dbReference type="BioGRID-ORCS" id="64798">
    <property type="hits" value="10 hits in 1146 CRISPR screens"/>
</dbReference>
<dbReference type="ChiTaRS" id="DEPTOR">
    <property type="organism name" value="human"/>
</dbReference>
<dbReference type="GeneWiki" id="DEPTOR"/>
<dbReference type="GenomeRNAi" id="64798"/>
<dbReference type="Pharos" id="Q8TB45">
    <property type="development level" value="Tchem"/>
</dbReference>
<dbReference type="PRO" id="PR:Q8TB45"/>
<dbReference type="Proteomes" id="UP000005640">
    <property type="component" value="Chromosome 8"/>
</dbReference>
<dbReference type="RNAct" id="Q8TB45">
    <property type="molecule type" value="protein"/>
</dbReference>
<dbReference type="Bgee" id="ENSG00000155792">
    <property type="expression patterns" value="Expressed in parotid gland and 203 other cell types or tissues"/>
</dbReference>
<dbReference type="GO" id="GO:0005765">
    <property type="term" value="C:lysosomal membrane"/>
    <property type="evidence" value="ECO:0000314"/>
    <property type="project" value="UniProtKB"/>
</dbReference>
<dbReference type="GO" id="GO:0005886">
    <property type="term" value="C:plasma membrane"/>
    <property type="evidence" value="ECO:0000318"/>
    <property type="project" value="GO_Central"/>
</dbReference>
<dbReference type="GO" id="GO:0005096">
    <property type="term" value="F:GTPase activator activity"/>
    <property type="evidence" value="ECO:0000318"/>
    <property type="project" value="GO_Central"/>
</dbReference>
<dbReference type="GO" id="GO:0005085">
    <property type="term" value="F:guanyl-nucleotide exchange factor activity"/>
    <property type="evidence" value="ECO:0000318"/>
    <property type="project" value="GO_Central"/>
</dbReference>
<dbReference type="GO" id="GO:0070300">
    <property type="term" value="F:phosphatidic acid binding"/>
    <property type="evidence" value="ECO:0000314"/>
    <property type="project" value="UniProtKB"/>
</dbReference>
<dbReference type="GO" id="GO:0004860">
    <property type="term" value="F:protein kinase inhibitor activity"/>
    <property type="evidence" value="ECO:0000314"/>
    <property type="project" value="UniProtKB"/>
</dbReference>
<dbReference type="GO" id="GO:0030291">
    <property type="term" value="F:protein serine/threonine kinase inhibitor activity"/>
    <property type="evidence" value="ECO:0000314"/>
    <property type="project" value="UniProt"/>
</dbReference>
<dbReference type="GO" id="GO:0007186">
    <property type="term" value="P:G protein-coupled receptor signaling pathway"/>
    <property type="evidence" value="ECO:0000318"/>
    <property type="project" value="GO_Central"/>
</dbReference>
<dbReference type="GO" id="GO:0035556">
    <property type="term" value="P:intracellular signal transduction"/>
    <property type="evidence" value="ECO:0007669"/>
    <property type="project" value="InterPro"/>
</dbReference>
<dbReference type="GO" id="GO:0045792">
    <property type="term" value="P:negative regulation of cell size"/>
    <property type="evidence" value="ECO:0000315"/>
    <property type="project" value="UniProtKB"/>
</dbReference>
<dbReference type="GO" id="GO:0006469">
    <property type="term" value="P:negative regulation of protein kinase activity"/>
    <property type="evidence" value="ECO:0000315"/>
    <property type="project" value="UniProtKB"/>
</dbReference>
<dbReference type="GO" id="GO:0032007">
    <property type="term" value="P:negative regulation of TOR signaling"/>
    <property type="evidence" value="ECO:0000315"/>
    <property type="project" value="UniProtKB"/>
</dbReference>
<dbReference type="GO" id="GO:1904262">
    <property type="term" value="P:negative regulation of TORC1 signaling"/>
    <property type="evidence" value="ECO:0000314"/>
    <property type="project" value="UniProtKB"/>
</dbReference>
<dbReference type="GO" id="GO:1903940">
    <property type="term" value="P:negative regulation of TORC2 signaling"/>
    <property type="evidence" value="ECO:0000314"/>
    <property type="project" value="UniProtKB"/>
</dbReference>
<dbReference type="GO" id="GO:0010508">
    <property type="term" value="P:positive regulation of autophagy"/>
    <property type="evidence" value="ECO:0000314"/>
    <property type="project" value="UniProtKB"/>
</dbReference>
<dbReference type="GO" id="GO:2001236">
    <property type="term" value="P:regulation of extrinsic apoptotic signaling pathway"/>
    <property type="evidence" value="ECO:0000315"/>
    <property type="project" value="UniProtKB"/>
</dbReference>
<dbReference type="CDD" id="cd04442">
    <property type="entry name" value="DEP_1_DEP6"/>
    <property type="match status" value="1"/>
</dbReference>
<dbReference type="CDD" id="cd04441">
    <property type="entry name" value="DEP_2_DEP6"/>
    <property type="match status" value="1"/>
</dbReference>
<dbReference type="CDD" id="cd23067">
    <property type="entry name" value="PDZ_DEPTOR-like"/>
    <property type="match status" value="1"/>
</dbReference>
<dbReference type="FunFam" id="1.10.10.10:FF:000308">
    <property type="entry name" value="DEP domain-containing mTOR-interacting protein isoform X1"/>
    <property type="match status" value="1"/>
</dbReference>
<dbReference type="FunFam" id="1.10.10.10:FF:000332">
    <property type="entry name" value="DEP domain-containing mTOR-interacting protein isoform X1"/>
    <property type="match status" value="1"/>
</dbReference>
<dbReference type="FunFam" id="2.30.42.10:FF:000124">
    <property type="entry name" value="DEP domain-containing mTOR-interacting protein isoform X1"/>
    <property type="match status" value="1"/>
</dbReference>
<dbReference type="Gene3D" id="2.30.42.10">
    <property type="match status" value="1"/>
</dbReference>
<dbReference type="Gene3D" id="1.10.10.10">
    <property type="entry name" value="Winged helix-like DNA-binding domain superfamily/Winged helix DNA-binding domain"/>
    <property type="match status" value="2"/>
</dbReference>
<dbReference type="InterPro" id="IPR000591">
    <property type="entry name" value="DEP_dom"/>
</dbReference>
<dbReference type="InterPro" id="IPR037335">
    <property type="entry name" value="DEPTOR_DEP_1"/>
</dbReference>
<dbReference type="InterPro" id="IPR037336">
    <property type="entry name" value="DEPTOR_DEP_2"/>
</dbReference>
<dbReference type="InterPro" id="IPR051832">
    <property type="entry name" value="mTOR-Rac_regulators"/>
</dbReference>
<dbReference type="InterPro" id="IPR001478">
    <property type="entry name" value="PDZ"/>
</dbReference>
<dbReference type="InterPro" id="IPR036034">
    <property type="entry name" value="PDZ_sf"/>
</dbReference>
<dbReference type="InterPro" id="IPR036388">
    <property type="entry name" value="WH-like_DNA-bd_sf"/>
</dbReference>
<dbReference type="InterPro" id="IPR036390">
    <property type="entry name" value="WH_DNA-bd_sf"/>
</dbReference>
<dbReference type="PANTHER" id="PTHR22829">
    <property type="entry name" value="DEP DOMAIN PROTEIN"/>
    <property type="match status" value="1"/>
</dbReference>
<dbReference type="PANTHER" id="PTHR22829:SF18">
    <property type="entry name" value="DEP DOMAIN-CONTAINING MTOR-INTERACTING PROTEIN"/>
    <property type="match status" value="1"/>
</dbReference>
<dbReference type="Pfam" id="PF00610">
    <property type="entry name" value="DEP"/>
    <property type="match status" value="2"/>
</dbReference>
<dbReference type="SMART" id="SM00049">
    <property type="entry name" value="DEP"/>
    <property type="match status" value="2"/>
</dbReference>
<dbReference type="SMART" id="SM00228">
    <property type="entry name" value="PDZ"/>
    <property type="match status" value="1"/>
</dbReference>
<dbReference type="SUPFAM" id="SSF50156">
    <property type="entry name" value="PDZ domain-like"/>
    <property type="match status" value="1"/>
</dbReference>
<dbReference type="SUPFAM" id="SSF46785">
    <property type="entry name" value="Winged helix' DNA-binding domain"/>
    <property type="match status" value="2"/>
</dbReference>
<dbReference type="PROSITE" id="PS50186">
    <property type="entry name" value="DEP"/>
    <property type="match status" value="2"/>
</dbReference>
<dbReference type="PROSITE" id="PS50106">
    <property type="entry name" value="PDZ"/>
    <property type="match status" value="1"/>
</dbReference>
<proteinExistence type="evidence at protein level"/>
<name>DPTOR_HUMAN</name>